<dbReference type="EMBL" id="CP000569">
    <property type="protein sequence ID" value="ABN74610.1"/>
    <property type="molecule type" value="Genomic_DNA"/>
</dbReference>
<dbReference type="RefSeq" id="WP_005619584.1">
    <property type="nucleotide sequence ID" value="NC_009053.1"/>
</dbReference>
<dbReference type="SMR" id="A3N2H4"/>
<dbReference type="STRING" id="416269.APL_1526"/>
<dbReference type="EnsemblBacteria" id="ABN74610">
    <property type="protein sequence ID" value="ABN74610"/>
    <property type="gene ID" value="APL_1526"/>
</dbReference>
<dbReference type="GeneID" id="48599797"/>
<dbReference type="KEGG" id="apl:APL_1526"/>
<dbReference type="eggNOG" id="COG3080">
    <property type="taxonomic scope" value="Bacteria"/>
</dbReference>
<dbReference type="HOGENOM" id="CLU_168367_0_0_6"/>
<dbReference type="Proteomes" id="UP000001432">
    <property type="component" value="Chromosome"/>
</dbReference>
<dbReference type="GO" id="GO:0045283">
    <property type="term" value="C:fumarate reductase complex"/>
    <property type="evidence" value="ECO:0007669"/>
    <property type="project" value="UniProtKB-UniRule"/>
</dbReference>
<dbReference type="GO" id="GO:0005886">
    <property type="term" value="C:plasma membrane"/>
    <property type="evidence" value="ECO:0007669"/>
    <property type="project" value="UniProtKB-SubCell"/>
</dbReference>
<dbReference type="GO" id="GO:0000104">
    <property type="term" value="F:succinate dehydrogenase activity"/>
    <property type="evidence" value="ECO:0007669"/>
    <property type="project" value="UniProtKB-UniRule"/>
</dbReference>
<dbReference type="GO" id="GO:0006106">
    <property type="term" value="P:fumarate metabolic process"/>
    <property type="evidence" value="ECO:0007669"/>
    <property type="project" value="InterPro"/>
</dbReference>
<dbReference type="CDD" id="cd00547">
    <property type="entry name" value="QFR_TypeD_subunitD"/>
    <property type="match status" value="1"/>
</dbReference>
<dbReference type="Gene3D" id="1.20.1300.10">
    <property type="entry name" value="Fumarate reductase/succinate dehydrogenase, transmembrane subunit"/>
    <property type="match status" value="1"/>
</dbReference>
<dbReference type="HAMAP" id="MF_00709">
    <property type="entry name" value="Fumarate_red_D"/>
    <property type="match status" value="1"/>
</dbReference>
<dbReference type="InterPro" id="IPR003418">
    <property type="entry name" value="Fumarate_red_D"/>
</dbReference>
<dbReference type="InterPro" id="IPR034804">
    <property type="entry name" value="SQR/QFR_C/D"/>
</dbReference>
<dbReference type="NCBIfam" id="NF003977">
    <property type="entry name" value="PRK05470.1-1"/>
    <property type="match status" value="1"/>
</dbReference>
<dbReference type="Pfam" id="PF02313">
    <property type="entry name" value="Fumarate_red_D"/>
    <property type="match status" value="1"/>
</dbReference>
<dbReference type="PIRSF" id="PIRSF000179">
    <property type="entry name" value="FrdD"/>
    <property type="match status" value="1"/>
</dbReference>
<dbReference type="SUPFAM" id="SSF81343">
    <property type="entry name" value="Fumarate reductase respiratory complex transmembrane subunits"/>
    <property type="match status" value="1"/>
</dbReference>
<comment type="function">
    <text evidence="1">Anchors the catalytic components of the fumarate reductase complex to the cell membrane, binds quinones.</text>
</comment>
<comment type="subunit">
    <text evidence="1">Part of an enzyme complex containing four subunits: a flavoprotein (FrdA), an iron-sulfur protein (FrdB), and two hydrophobic anchor proteins (FrdC and FrdD).</text>
</comment>
<comment type="subcellular location">
    <subcellularLocation>
        <location evidence="1">Cell inner membrane</location>
        <topology evidence="1">Multi-pass membrane protein</topology>
    </subcellularLocation>
</comment>
<comment type="similarity">
    <text evidence="1">Belongs to the FrdD family.</text>
</comment>
<keyword id="KW-0997">Cell inner membrane</keyword>
<keyword id="KW-1003">Cell membrane</keyword>
<keyword id="KW-0472">Membrane</keyword>
<keyword id="KW-1185">Reference proteome</keyword>
<keyword id="KW-0812">Transmembrane</keyword>
<keyword id="KW-1133">Transmembrane helix</keyword>
<proteinExistence type="inferred from homology"/>
<protein>
    <recommendedName>
        <fullName evidence="1">Fumarate reductase subunit D</fullName>
    </recommendedName>
    <alternativeName>
        <fullName evidence="1">Quinol-fumarate reductase subunit D</fullName>
        <shortName evidence="1">QFR subunit D</shortName>
    </alternativeName>
</protein>
<feature type="chain" id="PRO_1000045543" description="Fumarate reductase subunit D">
    <location>
        <begin position="1"/>
        <end position="114"/>
    </location>
</feature>
<feature type="transmembrane region" description="Helical" evidence="1">
    <location>
        <begin position="27"/>
        <end position="47"/>
    </location>
</feature>
<feature type="transmembrane region" description="Helical" evidence="1">
    <location>
        <begin position="50"/>
        <end position="70"/>
    </location>
</feature>
<feature type="transmembrane region" description="Helical" evidence="1">
    <location>
        <begin position="94"/>
        <end position="114"/>
    </location>
</feature>
<sequence>MNKQDPKRSNEPPVWLMFSAGGTISAICFPVLLLILGVLLPLGLVPVENIVAFAHTWFGKLVILAVTIFPMWAGMHRVHHGLHDLKIHFPAGGWVFYGLSALYSVIVFFAVIAL</sequence>
<evidence type="ECO:0000255" key="1">
    <source>
        <dbReference type="HAMAP-Rule" id="MF_00709"/>
    </source>
</evidence>
<accession>A3N2H4</accession>
<reference key="1">
    <citation type="journal article" date="2008" name="J. Bacteriol.">
        <title>The complete genome sequence of Actinobacillus pleuropneumoniae L20 (serotype 5b).</title>
        <authorList>
            <person name="Foote S.J."/>
            <person name="Bosse J.T."/>
            <person name="Bouevitch A.B."/>
            <person name="Langford P.R."/>
            <person name="Young N.M."/>
            <person name="Nash J.H.E."/>
        </authorList>
    </citation>
    <scope>NUCLEOTIDE SEQUENCE [LARGE SCALE GENOMIC DNA]</scope>
    <source>
        <strain>L20</strain>
    </source>
</reference>
<name>FRDD_ACTP2</name>
<organism>
    <name type="scientific">Actinobacillus pleuropneumoniae serotype 5b (strain L20)</name>
    <dbReference type="NCBI Taxonomy" id="416269"/>
    <lineage>
        <taxon>Bacteria</taxon>
        <taxon>Pseudomonadati</taxon>
        <taxon>Pseudomonadota</taxon>
        <taxon>Gammaproteobacteria</taxon>
        <taxon>Pasteurellales</taxon>
        <taxon>Pasteurellaceae</taxon>
        <taxon>Actinobacillus</taxon>
    </lineage>
</organism>
<gene>
    <name evidence="1" type="primary">frdD</name>
    <name type="ordered locus">APL_1526</name>
</gene>